<accession>Q9K0J8</accession>
<sequence>MNTLYLGSNSPRRMEILTQLGYRVIQLPAGIDESVKAGETPFAYVQRMAEEKNRTALTLFCETNGTMPDFPLITADTCVVSDGIILGKPRSQAEAIEFLNRLSGKQHTVLTAVCIHYRGKTSSRVQTNRVVFKPLSSEEISAYVQSGEPMDKAGAYAVQGIGGIFIQSIEGSFSGIMGLPVYETVSMLQDLGYRSPLSALKP</sequence>
<name>NTPPA_NEIMB</name>
<protein>
    <recommendedName>
        <fullName evidence="1">dTTP/UTP pyrophosphatase</fullName>
        <shortName evidence="1">dTTPase/UTPase</shortName>
        <ecNumber evidence="1">3.6.1.9</ecNumber>
    </recommendedName>
    <alternativeName>
        <fullName evidence="1">Nucleoside triphosphate pyrophosphatase</fullName>
    </alternativeName>
    <alternativeName>
        <fullName evidence="1">Nucleotide pyrophosphatase</fullName>
        <shortName evidence="1">Nucleotide PPase</shortName>
    </alternativeName>
</protein>
<reference key="1">
    <citation type="journal article" date="2000" name="Science">
        <title>Complete genome sequence of Neisseria meningitidis serogroup B strain MC58.</title>
        <authorList>
            <person name="Tettelin H."/>
            <person name="Saunders N.J."/>
            <person name="Heidelberg J.F."/>
            <person name="Jeffries A.C."/>
            <person name="Nelson K.E."/>
            <person name="Eisen J.A."/>
            <person name="Ketchum K.A."/>
            <person name="Hood D.W."/>
            <person name="Peden J.F."/>
            <person name="Dodson R.J."/>
            <person name="Nelson W.C."/>
            <person name="Gwinn M.L."/>
            <person name="DeBoy R.T."/>
            <person name="Peterson J.D."/>
            <person name="Hickey E.K."/>
            <person name="Haft D.H."/>
            <person name="Salzberg S.L."/>
            <person name="White O."/>
            <person name="Fleischmann R.D."/>
            <person name="Dougherty B.A."/>
            <person name="Mason T.M."/>
            <person name="Ciecko A."/>
            <person name="Parksey D.S."/>
            <person name="Blair E."/>
            <person name="Cittone H."/>
            <person name="Clark E.B."/>
            <person name="Cotton M.D."/>
            <person name="Utterback T.R."/>
            <person name="Khouri H.M."/>
            <person name="Qin H."/>
            <person name="Vamathevan J.J."/>
            <person name="Gill J."/>
            <person name="Scarlato V."/>
            <person name="Masignani V."/>
            <person name="Pizza M."/>
            <person name="Grandi G."/>
            <person name="Sun L."/>
            <person name="Smith H.O."/>
            <person name="Fraser C.M."/>
            <person name="Moxon E.R."/>
            <person name="Rappuoli R."/>
            <person name="Venter J.C."/>
        </authorList>
    </citation>
    <scope>NUCLEOTIDE SEQUENCE [LARGE SCALE GENOMIC DNA]</scope>
    <source>
        <strain>ATCC BAA-335 / MC58</strain>
    </source>
</reference>
<evidence type="ECO:0000255" key="1">
    <source>
        <dbReference type="HAMAP-Rule" id="MF_00528"/>
    </source>
</evidence>
<keyword id="KW-0963">Cytoplasm</keyword>
<keyword id="KW-0378">Hydrolase</keyword>
<keyword id="KW-0546">Nucleotide metabolism</keyword>
<keyword id="KW-1185">Reference proteome</keyword>
<proteinExistence type="inferred from homology"/>
<feature type="chain" id="PRO_0000123033" description="dTTP/UTP pyrophosphatase">
    <location>
        <begin position="1"/>
        <end position="202"/>
    </location>
</feature>
<feature type="active site" description="Proton acceptor" evidence="1">
    <location>
        <position position="76"/>
    </location>
</feature>
<feature type="site" description="Important for substrate specificity" evidence="1">
    <location>
        <position position="12"/>
    </location>
</feature>
<feature type="site" description="Important for substrate specificity" evidence="1">
    <location>
        <position position="77"/>
    </location>
</feature>
<feature type="site" description="Important for substrate specificity" evidence="1">
    <location>
        <position position="159"/>
    </location>
</feature>
<gene>
    <name type="ordered locus">NMB0598</name>
</gene>
<comment type="function">
    <text evidence="1">Nucleoside triphosphate pyrophosphatase that hydrolyzes dTTP and UTP. May have a dual role in cell division arrest and in preventing the incorporation of modified nucleotides into cellular nucleic acids.</text>
</comment>
<comment type="catalytic activity">
    <reaction evidence="1">
        <text>dTTP + H2O = dTMP + diphosphate + H(+)</text>
        <dbReference type="Rhea" id="RHEA:28534"/>
        <dbReference type="ChEBI" id="CHEBI:15377"/>
        <dbReference type="ChEBI" id="CHEBI:15378"/>
        <dbReference type="ChEBI" id="CHEBI:33019"/>
        <dbReference type="ChEBI" id="CHEBI:37568"/>
        <dbReference type="ChEBI" id="CHEBI:63528"/>
        <dbReference type="EC" id="3.6.1.9"/>
    </reaction>
</comment>
<comment type="catalytic activity">
    <reaction evidence="1">
        <text>UTP + H2O = UMP + diphosphate + H(+)</text>
        <dbReference type="Rhea" id="RHEA:29395"/>
        <dbReference type="ChEBI" id="CHEBI:15377"/>
        <dbReference type="ChEBI" id="CHEBI:15378"/>
        <dbReference type="ChEBI" id="CHEBI:33019"/>
        <dbReference type="ChEBI" id="CHEBI:46398"/>
        <dbReference type="ChEBI" id="CHEBI:57865"/>
        <dbReference type="EC" id="3.6.1.9"/>
    </reaction>
</comment>
<comment type="cofactor">
    <cofactor evidence="1">
        <name>a divalent metal cation</name>
        <dbReference type="ChEBI" id="CHEBI:60240"/>
    </cofactor>
</comment>
<comment type="subcellular location">
    <subcellularLocation>
        <location evidence="1">Cytoplasm</location>
    </subcellularLocation>
</comment>
<comment type="similarity">
    <text evidence="1">Belongs to the Maf family. YhdE subfamily.</text>
</comment>
<dbReference type="EC" id="3.6.1.9" evidence="1"/>
<dbReference type="EMBL" id="AE002098">
    <property type="protein sequence ID" value="AAF41026.1"/>
    <property type="molecule type" value="Genomic_DNA"/>
</dbReference>
<dbReference type="PIR" id="C81181">
    <property type="entry name" value="C81181"/>
</dbReference>
<dbReference type="RefSeq" id="NP_273642.1">
    <property type="nucleotide sequence ID" value="NC_003112.2"/>
</dbReference>
<dbReference type="RefSeq" id="WP_002222850.1">
    <property type="nucleotide sequence ID" value="NC_003112.2"/>
</dbReference>
<dbReference type="SMR" id="Q9K0J8"/>
<dbReference type="FunCoup" id="Q9K0J8">
    <property type="interactions" value="301"/>
</dbReference>
<dbReference type="STRING" id="122586.NMB0598"/>
<dbReference type="PaxDb" id="122586-NMB0598"/>
<dbReference type="KEGG" id="nme:NMB0598"/>
<dbReference type="PATRIC" id="fig|122586.8.peg.760"/>
<dbReference type="HOGENOM" id="CLU_040416_2_1_4"/>
<dbReference type="InParanoid" id="Q9K0J8"/>
<dbReference type="OrthoDB" id="9807767at2"/>
<dbReference type="Proteomes" id="UP000000425">
    <property type="component" value="Chromosome"/>
</dbReference>
<dbReference type="GO" id="GO:0005737">
    <property type="term" value="C:cytoplasm"/>
    <property type="evidence" value="ECO:0007669"/>
    <property type="project" value="UniProtKB-SubCell"/>
</dbReference>
<dbReference type="GO" id="GO:0036218">
    <property type="term" value="F:dTTP diphosphatase activity"/>
    <property type="evidence" value="ECO:0007669"/>
    <property type="project" value="RHEA"/>
</dbReference>
<dbReference type="GO" id="GO:0047429">
    <property type="term" value="F:nucleoside triphosphate diphosphatase activity"/>
    <property type="evidence" value="ECO:0000318"/>
    <property type="project" value="GO_Central"/>
</dbReference>
<dbReference type="GO" id="GO:0036221">
    <property type="term" value="F:UTP diphosphatase activity"/>
    <property type="evidence" value="ECO:0007669"/>
    <property type="project" value="RHEA"/>
</dbReference>
<dbReference type="GO" id="GO:0009117">
    <property type="term" value="P:nucleotide metabolic process"/>
    <property type="evidence" value="ECO:0007669"/>
    <property type="project" value="UniProtKB-KW"/>
</dbReference>
<dbReference type="CDD" id="cd00555">
    <property type="entry name" value="Maf"/>
    <property type="match status" value="1"/>
</dbReference>
<dbReference type="FunFam" id="3.90.950.10:FF:000027">
    <property type="entry name" value="dTTP/UTP pyrophosphatase"/>
    <property type="match status" value="1"/>
</dbReference>
<dbReference type="Gene3D" id="3.90.950.10">
    <property type="match status" value="1"/>
</dbReference>
<dbReference type="HAMAP" id="MF_00528">
    <property type="entry name" value="Maf"/>
    <property type="match status" value="1"/>
</dbReference>
<dbReference type="InterPro" id="IPR029001">
    <property type="entry name" value="ITPase-like_fam"/>
</dbReference>
<dbReference type="InterPro" id="IPR003697">
    <property type="entry name" value="Maf-like"/>
</dbReference>
<dbReference type="NCBIfam" id="TIGR00172">
    <property type="entry name" value="maf"/>
    <property type="match status" value="1"/>
</dbReference>
<dbReference type="NCBIfam" id="NF010947">
    <property type="entry name" value="PRK14367.1"/>
    <property type="match status" value="1"/>
</dbReference>
<dbReference type="PANTHER" id="PTHR43213">
    <property type="entry name" value="BIFUNCTIONAL DTTP/UTP PYROPHOSPHATASE/METHYLTRANSFERASE PROTEIN-RELATED"/>
    <property type="match status" value="1"/>
</dbReference>
<dbReference type="PANTHER" id="PTHR43213:SF5">
    <property type="entry name" value="BIFUNCTIONAL DTTP_UTP PYROPHOSPHATASE_METHYLTRANSFERASE PROTEIN-RELATED"/>
    <property type="match status" value="1"/>
</dbReference>
<dbReference type="Pfam" id="PF02545">
    <property type="entry name" value="Maf"/>
    <property type="match status" value="1"/>
</dbReference>
<dbReference type="PIRSF" id="PIRSF006305">
    <property type="entry name" value="Maf"/>
    <property type="match status" value="1"/>
</dbReference>
<dbReference type="SUPFAM" id="SSF52972">
    <property type="entry name" value="ITPase-like"/>
    <property type="match status" value="1"/>
</dbReference>
<organism>
    <name type="scientific">Neisseria meningitidis serogroup B (strain ATCC BAA-335 / MC58)</name>
    <dbReference type="NCBI Taxonomy" id="122586"/>
    <lineage>
        <taxon>Bacteria</taxon>
        <taxon>Pseudomonadati</taxon>
        <taxon>Pseudomonadota</taxon>
        <taxon>Betaproteobacteria</taxon>
        <taxon>Neisseriales</taxon>
        <taxon>Neisseriaceae</taxon>
        <taxon>Neisseria</taxon>
    </lineage>
</organism>